<name>RNZ_BORGP</name>
<organism>
    <name type="scientific">Borrelia garinii subsp. bavariensis (strain ATCC BAA-2496 / DSM 23469 / PBi)</name>
    <name type="common">Borreliella bavariensis</name>
    <dbReference type="NCBI Taxonomy" id="290434"/>
    <lineage>
        <taxon>Bacteria</taxon>
        <taxon>Pseudomonadati</taxon>
        <taxon>Spirochaetota</taxon>
        <taxon>Spirochaetia</taxon>
        <taxon>Spirochaetales</taxon>
        <taxon>Borreliaceae</taxon>
        <taxon>Borreliella</taxon>
    </lineage>
</organism>
<keyword id="KW-0255">Endonuclease</keyword>
<keyword id="KW-0378">Hydrolase</keyword>
<keyword id="KW-0479">Metal-binding</keyword>
<keyword id="KW-0540">Nuclease</keyword>
<keyword id="KW-0819">tRNA processing</keyword>
<keyword id="KW-0862">Zinc</keyword>
<accession>Q660C0</accession>
<proteinExistence type="inferred from homology"/>
<evidence type="ECO:0000255" key="1">
    <source>
        <dbReference type="HAMAP-Rule" id="MF_01818"/>
    </source>
</evidence>
<feature type="chain" id="PRO_0000155852" description="Ribonuclease Z">
    <location>
        <begin position="1"/>
        <end position="319"/>
    </location>
</feature>
<feature type="active site" description="Proton acceptor" evidence="1">
    <location>
        <position position="66"/>
    </location>
</feature>
<feature type="binding site" evidence="1">
    <location>
        <position position="62"/>
    </location>
    <ligand>
        <name>Zn(2+)</name>
        <dbReference type="ChEBI" id="CHEBI:29105"/>
        <label>1</label>
        <note>catalytic</note>
    </ligand>
</feature>
<feature type="binding site" evidence="1">
    <location>
        <position position="64"/>
    </location>
    <ligand>
        <name>Zn(2+)</name>
        <dbReference type="ChEBI" id="CHEBI:29105"/>
        <label>1</label>
        <note>catalytic</note>
    </ligand>
</feature>
<feature type="binding site" evidence="1">
    <location>
        <position position="66"/>
    </location>
    <ligand>
        <name>Zn(2+)</name>
        <dbReference type="ChEBI" id="CHEBI:29105"/>
        <label>2</label>
        <note>catalytic</note>
    </ligand>
</feature>
<feature type="binding site" evidence="1">
    <location>
        <position position="67"/>
    </location>
    <ligand>
        <name>Zn(2+)</name>
        <dbReference type="ChEBI" id="CHEBI:29105"/>
        <label>2</label>
        <note>catalytic</note>
    </ligand>
</feature>
<feature type="binding site" evidence="1">
    <location>
        <position position="145"/>
    </location>
    <ligand>
        <name>Zn(2+)</name>
        <dbReference type="ChEBI" id="CHEBI:29105"/>
        <label>1</label>
        <note>catalytic</note>
    </ligand>
</feature>
<feature type="binding site" evidence="1">
    <location>
        <position position="215"/>
    </location>
    <ligand>
        <name>Zn(2+)</name>
        <dbReference type="ChEBI" id="CHEBI:29105"/>
        <label>1</label>
        <note>catalytic</note>
    </ligand>
</feature>
<feature type="binding site" evidence="1">
    <location>
        <position position="215"/>
    </location>
    <ligand>
        <name>Zn(2+)</name>
        <dbReference type="ChEBI" id="CHEBI:29105"/>
        <label>2</label>
        <note>catalytic</note>
    </ligand>
</feature>
<feature type="binding site" evidence="1">
    <location>
        <position position="273"/>
    </location>
    <ligand>
        <name>Zn(2+)</name>
        <dbReference type="ChEBI" id="CHEBI:29105"/>
        <label>2</label>
        <note>catalytic</note>
    </ligand>
</feature>
<reference key="1">
    <citation type="journal article" date="2004" name="Nucleic Acids Res.">
        <title>Comparative analysis of the Borrelia garinii genome.</title>
        <authorList>
            <person name="Gloeckner G."/>
            <person name="Lehmann R."/>
            <person name="Romualdi A."/>
            <person name="Pradella S."/>
            <person name="Schulte-Spechtel U."/>
            <person name="Schilhabel M."/>
            <person name="Wilske B."/>
            <person name="Suehnel J."/>
            <person name="Platzer M."/>
        </authorList>
    </citation>
    <scope>NUCLEOTIDE SEQUENCE [LARGE SCALE GENOMIC DNA]</scope>
    <source>
        <strain>ATCC BAA-2496 / DSM 23469 / PBi</strain>
    </source>
</reference>
<gene>
    <name evidence="1" type="primary">rnz</name>
    <name type="ordered locus">BG0777</name>
</gene>
<protein>
    <recommendedName>
        <fullName evidence="1">Ribonuclease Z</fullName>
        <shortName evidence="1">RNase Z</shortName>
        <ecNumber evidence="1">3.1.26.11</ecNumber>
    </recommendedName>
    <alternativeName>
        <fullName evidence="1">tRNA 3 endonuclease</fullName>
    </alternativeName>
    <alternativeName>
        <fullName evidence="1">tRNase Z</fullName>
    </alternativeName>
</protein>
<sequence>MGFNINIIGTGGTRPLHNRYLSSVLIEYNGDNFLFDCGEGTQMSLRKQKISWQKIKMICITHLHADHITGLLGIVMLMSQSGETRKEPLIIAGPVGIKNYTKTNIDILKIYKNYEIIYKEIIIDKTEKIIYEDKTKKIEYTRLKHSIECVGYLFIEKDKPGKFNTEKAEELNIPKGPIRKTLQDGKEILIDGKIIKPSEILGESKKGLKVAYITDTGYFKELIQQIKNFNLVIIESTFKNELKKEADKKLHLTAGGAANIVKQAKVLKTGLIHFSERYTLRKDLENLLKEAKLEYPDGEIFLTKDGMRLEANKNNFIIK</sequence>
<dbReference type="EC" id="3.1.26.11" evidence="1"/>
<dbReference type="EMBL" id="CP000013">
    <property type="protein sequence ID" value="AAU07601.1"/>
    <property type="molecule type" value="Genomic_DNA"/>
</dbReference>
<dbReference type="RefSeq" id="WP_011194048.1">
    <property type="nucleotide sequence ID" value="NZ_CP028872.1"/>
</dbReference>
<dbReference type="SMR" id="Q660C0"/>
<dbReference type="GeneID" id="45161553"/>
<dbReference type="KEGG" id="bga:BG0777"/>
<dbReference type="eggNOG" id="COG1234">
    <property type="taxonomic scope" value="Bacteria"/>
</dbReference>
<dbReference type="HOGENOM" id="CLU_031317_2_1_12"/>
<dbReference type="OrthoDB" id="9800940at2"/>
<dbReference type="Proteomes" id="UP000002276">
    <property type="component" value="Chromosome"/>
</dbReference>
<dbReference type="GO" id="GO:0042781">
    <property type="term" value="F:3'-tRNA processing endoribonuclease activity"/>
    <property type="evidence" value="ECO:0007669"/>
    <property type="project" value="UniProtKB-UniRule"/>
</dbReference>
<dbReference type="GO" id="GO:0008270">
    <property type="term" value="F:zinc ion binding"/>
    <property type="evidence" value="ECO:0007669"/>
    <property type="project" value="UniProtKB-UniRule"/>
</dbReference>
<dbReference type="CDD" id="cd07717">
    <property type="entry name" value="RNaseZ_ZiPD-like_MBL-fold"/>
    <property type="match status" value="1"/>
</dbReference>
<dbReference type="Gene3D" id="3.60.15.10">
    <property type="entry name" value="Ribonuclease Z/Hydroxyacylglutathione hydrolase-like"/>
    <property type="match status" value="1"/>
</dbReference>
<dbReference type="HAMAP" id="MF_01818">
    <property type="entry name" value="RNase_Z_BN"/>
    <property type="match status" value="1"/>
</dbReference>
<dbReference type="InterPro" id="IPR001279">
    <property type="entry name" value="Metallo-B-lactamas"/>
</dbReference>
<dbReference type="InterPro" id="IPR036866">
    <property type="entry name" value="RibonucZ/Hydroxyglut_hydro"/>
</dbReference>
<dbReference type="InterPro" id="IPR013471">
    <property type="entry name" value="RNase_Z/BN"/>
</dbReference>
<dbReference type="NCBIfam" id="NF000801">
    <property type="entry name" value="PRK00055.1-3"/>
    <property type="match status" value="1"/>
</dbReference>
<dbReference type="NCBIfam" id="TIGR02651">
    <property type="entry name" value="RNase_Z"/>
    <property type="match status" value="1"/>
</dbReference>
<dbReference type="PANTHER" id="PTHR46018">
    <property type="entry name" value="ZINC PHOSPHODIESTERASE ELAC PROTEIN 1"/>
    <property type="match status" value="1"/>
</dbReference>
<dbReference type="PANTHER" id="PTHR46018:SF2">
    <property type="entry name" value="ZINC PHOSPHODIESTERASE ELAC PROTEIN 1"/>
    <property type="match status" value="1"/>
</dbReference>
<dbReference type="Pfam" id="PF00753">
    <property type="entry name" value="Lactamase_B"/>
    <property type="match status" value="1"/>
</dbReference>
<dbReference type="Pfam" id="PF12706">
    <property type="entry name" value="Lactamase_B_2"/>
    <property type="match status" value="1"/>
</dbReference>
<dbReference type="SUPFAM" id="SSF56281">
    <property type="entry name" value="Metallo-hydrolase/oxidoreductase"/>
    <property type="match status" value="1"/>
</dbReference>
<comment type="function">
    <text evidence="1">Zinc phosphodiesterase, which displays some tRNA 3'-processing endonuclease activity. Probably involved in tRNA maturation, by removing a 3'-trailer from precursor tRNA.</text>
</comment>
<comment type="catalytic activity">
    <reaction evidence="1">
        <text>Endonucleolytic cleavage of RNA, removing extra 3' nucleotides from tRNA precursor, generating 3' termini of tRNAs. A 3'-hydroxy group is left at the tRNA terminus and a 5'-phosphoryl group is left at the trailer molecule.</text>
        <dbReference type="EC" id="3.1.26.11"/>
    </reaction>
</comment>
<comment type="cofactor">
    <cofactor evidence="1">
        <name>Zn(2+)</name>
        <dbReference type="ChEBI" id="CHEBI:29105"/>
    </cofactor>
    <text evidence="1">Binds 2 Zn(2+) ions.</text>
</comment>
<comment type="subunit">
    <text evidence="1">Homodimer.</text>
</comment>
<comment type="similarity">
    <text evidence="1">Belongs to the RNase Z family.</text>
</comment>